<evidence type="ECO:0000255" key="1">
    <source>
        <dbReference type="HAMAP-Rule" id="MF_00210"/>
    </source>
</evidence>
<feature type="chain" id="PRO_1000099725" description="3-phosphoshikimate 1-carboxyvinyltransferase">
    <location>
        <begin position="1"/>
        <end position="435"/>
    </location>
</feature>
<feature type="active site" description="Proton acceptor" evidence="1">
    <location>
        <position position="311"/>
    </location>
</feature>
<feature type="binding site" evidence="1">
    <location>
        <position position="23"/>
    </location>
    <ligand>
        <name>3-phosphoshikimate</name>
        <dbReference type="ChEBI" id="CHEBI:145989"/>
    </ligand>
</feature>
<feature type="binding site" evidence="1">
    <location>
        <position position="23"/>
    </location>
    <ligand>
        <name>phosphoenolpyruvate</name>
        <dbReference type="ChEBI" id="CHEBI:58702"/>
    </ligand>
</feature>
<feature type="binding site" evidence="1">
    <location>
        <position position="24"/>
    </location>
    <ligand>
        <name>3-phosphoshikimate</name>
        <dbReference type="ChEBI" id="CHEBI:145989"/>
    </ligand>
</feature>
<feature type="binding site" evidence="1">
    <location>
        <position position="28"/>
    </location>
    <ligand>
        <name>3-phosphoshikimate</name>
        <dbReference type="ChEBI" id="CHEBI:145989"/>
    </ligand>
</feature>
<feature type="binding site" evidence="1">
    <location>
        <position position="96"/>
    </location>
    <ligand>
        <name>phosphoenolpyruvate</name>
        <dbReference type="ChEBI" id="CHEBI:58702"/>
    </ligand>
</feature>
<feature type="binding site" evidence="1">
    <location>
        <position position="124"/>
    </location>
    <ligand>
        <name>phosphoenolpyruvate</name>
        <dbReference type="ChEBI" id="CHEBI:58702"/>
    </ligand>
</feature>
<feature type="binding site" evidence="1">
    <location>
        <position position="167"/>
    </location>
    <ligand>
        <name>3-phosphoshikimate</name>
        <dbReference type="ChEBI" id="CHEBI:145989"/>
    </ligand>
</feature>
<feature type="binding site" evidence="1">
    <location>
        <position position="168"/>
    </location>
    <ligand>
        <name>3-phosphoshikimate</name>
        <dbReference type="ChEBI" id="CHEBI:145989"/>
    </ligand>
</feature>
<feature type="binding site" evidence="1">
    <location>
        <position position="169"/>
    </location>
    <ligand>
        <name>3-phosphoshikimate</name>
        <dbReference type="ChEBI" id="CHEBI:145989"/>
    </ligand>
</feature>
<feature type="binding site" evidence="1">
    <location>
        <position position="169"/>
    </location>
    <ligand>
        <name>phosphoenolpyruvate</name>
        <dbReference type="ChEBI" id="CHEBI:58702"/>
    </ligand>
</feature>
<feature type="binding site" evidence="1">
    <location>
        <position position="196"/>
    </location>
    <ligand>
        <name>3-phosphoshikimate</name>
        <dbReference type="ChEBI" id="CHEBI:145989"/>
    </ligand>
</feature>
<feature type="binding site" evidence="1">
    <location>
        <position position="311"/>
    </location>
    <ligand>
        <name>3-phosphoshikimate</name>
        <dbReference type="ChEBI" id="CHEBI:145989"/>
    </ligand>
</feature>
<feature type="binding site" evidence="1">
    <location>
        <position position="340"/>
    </location>
    <ligand>
        <name>3-phosphoshikimate</name>
        <dbReference type="ChEBI" id="CHEBI:145989"/>
    </ligand>
</feature>
<feature type="binding site" evidence="1">
    <location>
        <position position="344"/>
    </location>
    <ligand>
        <name>phosphoenolpyruvate</name>
        <dbReference type="ChEBI" id="CHEBI:58702"/>
    </ligand>
</feature>
<feature type="binding site" evidence="1">
    <location>
        <position position="385"/>
    </location>
    <ligand>
        <name>phosphoenolpyruvate</name>
        <dbReference type="ChEBI" id="CHEBI:58702"/>
    </ligand>
</feature>
<feature type="binding site" evidence="1">
    <location>
        <position position="410"/>
    </location>
    <ligand>
        <name>phosphoenolpyruvate</name>
        <dbReference type="ChEBI" id="CHEBI:58702"/>
    </ligand>
</feature>
<protein>
    <recommendedName>
        <fullName evidence="1">3-phosphoshikimate 1-carboxyvinyltransferase</fullName>
        <ecNumber evidence="1">2.5.1.19</ecNumber>
    </recommendedName>
    <alternativeName>
        <fullName evidence="1">5-enolpyruvylshikimate-3-phosphate synthase</fullName>
        <shortName evidence="1">EPSP synthase</shortName>
        <shortName evidence="1">EPSPS</shortName>
    </alternativeName>
</protein>
<comment type="function">
    <text evidence="1">Catalyzes the transfer of the enolpyruvyl moiety of phosphoenolpyruvate (PEP) to the 5-hydroxyl of shikimate-3-phosphate (S3P) to produce enolpyruvyl shikimate-3-phosphate and inorganic phosphate.</text>
</comment>
<comment type="catalytic activity">
    <reaction evidence="1">
        <text>3-phosphoshikimate + phosphoenolpyruvate = 5-O-(1-carboxyvinyl)-3-phosphoshikimate + phosphate</text>
        <dbReference type="Rhea" id="RHEA:21256"/>
        <dbReference type="ChEBI" id="CHEBI:43474"/>
        <dbReference type="ChEBI" id="CHEBI:57701"/>
        <dbReference type="ChEBI" id="CHEBI:58702"/>
        <dbReference type="ChEBI" id="CHEBI:145989"/>
        <dbReference type="EC" id="2.5.1.19"/>
    </reaction>
    <physiologicalReaction direction="left-to-right" evidence="1">
        <dbReference type="Rhea" id="RHEA:21257"/>
    </physiologicalReaction>
</comment>
<comment type="pathway">
    <text evidence="1">Metabolic intermediate biosynthesis; chorismate biosynthesis; chorismate from D-erythrose 4-phosphate and phosphoenolpyruvate: step 6/7.</text>
</comment>
<comment type="subunit">
    <text evidence="1">Monomer.</text>
</comment>
<comment type="subcellular location">
    <subcellularLocation>
        <location evidence="1">Cytoplasm</location>
    </subcellularLocation>
</comment>
<comment type="similarity">
    <text evidence="1">Belongs to the EPSP synthase family.</text>
</comment>
<dbReference type="EC" id="2.5.1.19" evidence="1"/>
<dbReference type="EMBL" id="AE016958">
    <property type="protein sequence ID" value="AAS05884.1"/>
    <property type="molecule type" value="Genomic_DNA"/>
</dbReference>
<dbReference type="RefSeq" id="WP_010949928.1">
    <property type="nucleotide sequence ID" value="NZ_CP106873.1"/>
</dbReference>
<dbReference type="SMR" id="Q73UN2"/>
<dbReference type="STRING" id="262316.MAP_3334"/>
<dbReference type="KEGG" id="mpa:MAP_3334"/>
<dbReference type="PATRIC" id="fig|262316.17.peg.3542"/>
<dbReference type="eggNOG" id="COG0128">
    <property type="taxonomic scope" value="Bacteria"/>
</dbReference>
<dbReference type="HOGENOM" id="CLU_024321_0_0_11"/>
<dbReference type="UniPathway" id="UPA00053">
    <property type="reaction ID" value="UER00089"/>
</dbReference>
<dbReference type="Proteomes" id="UP000000580">
    <property type="component" value="Chromosome"/>
</dbReference>
<dbReference type="GO" id="GO:0005737">
    <property type="term" value="C:cytoplasm"/>
    <property type="evidence" value="ECO:0007669"/>
    <property type="project" value="UniProtKB-SubCell"/>
</dbReference>
<dbReference type="GO" id="GO:0003866">
    <property type="term" value="F:3-phosphoshikimate 1-carboxyvinyltransferase activity"/>
    <property type="evidence" value="ECO:0007669"/>
    <property type="project" value="UniProtKB-UniRule"/>
</dbReference>
<dbReference type="GO" id="GO:0008652">
    <property type="term" value="P:amino acid biosynthetic process"/>
    <property type="evidence" value="ECO:0007669"/>
    <property type="project" value="UniProtKB-KW"/>
</dbReference>
<dbReference type="GO" id="GO:0009073">
    <property type="term" value="P:aromatic amino acid family biosynthetic process"/>
    <property type="evidence" value="ECO:0007669"/>
    <property type="project" value="UniProtKB-KW"/>
</dbReference>
<dbReference type="GO" id="GO:0009423">
    <property type="term" value="P:chorismate biosynthetic process"/>
    <property type="evidence" value="ECO:0007669"/>
    <property type="project" value="UniProtKB-UniRule"/>
</dbReference>
<dbReference type="CDD" id="cd01556">
    <property type="entry name" value="EPSP_synthase"/>
    <property type="match status" value="1"/>
</dbReference>
<dbReference type="FunFam" id="3.65.10.10:FF:000010">
    <property type="entry name" value="3-phosphoshikimate 1-carboxyvinyltransferase"/>
    <property type="match status" value="1"/>
</dbReference>
<dbReference type="FunFam" id="3.65.10.10:FF:000011">
    <property type="entry name" value="3-phosphoshikimate 1-carboxyvinyltransferase"/>
    <property type="match status" value="1"/>
</dbReference>
<dbReference type="Gene3D" id="3.65.10.10">
    <property type="entry name" value="Enolpyruvate transferase domain"/>
    <property type="match status" value="2"/>
</dbReference>
<dbReference type="HAMAP" id="MF_00210">
    <property type="entry name" value="EPSP_synth"/>
    <property type="match status" value="1"/>
</dbReference>
<dbReference type="InterPro" id="IPR001986">
    <property type="entry name" value="Enolpyruvate_Tfrase_dom"/>
</dbReference>
<dbReference type="InterPro" id="IPR036968">
    <property type="entry name" value="Enolpyruvate_Tfrase_sf"/>
</dbReference>
<dbReference type="InterPro" id="IPR006264">
    <property type="entry name" value="EPSP_synthase"/>
</dbReference>
<dbReference type="InterPro" id="IPR023193">
    <property type="entry name" value="EPSP_synthase_CS"/>
</dbReference>
<dbReference type="InterPro" id="IPR013792">
    <property type="entry name" value="RNA3'P_cycl/enolpyr_Trfase_a/b"/>
</dbReference>
<dbReference type="NCBIfam" id="TIGR01356">
    <property type="entry name" value="aroA"/>
    <property type="match status" value="1"/>
</dbReference>
<dbReference type="PANTHER" id="PTHR21090">
    <property type="entry name" value="AROM/DEHYDROQUINATE SYNTHASE"/>
    <property type="match status" value="1"/>
</dbReference>
<dbReference type="PANTHER" id="PTHR21090:SF5">
    <property type="entry name" value="PENTAFUNCTIONAL AROM POLYPEPTIDE"/>
    <property type="match status" value="1"/>
</dbReference>
<dbReference type="Pfam" id="PF00275">
    <property type="entry name" value="EPSP_synthase"/>
    <property type="match status" value="1"/>
</dbReference>
<dbReference type="PIRSF" id="PIRSF000505">
    <property type="entry name" value="EPSPS"/>
    <property type="match status" value="1"/>
</dbReference>
<dbReference type="SUPFAM" id="SSF55205">
    <property type="entry name" value="EPT/RTPC-like"/>
    <property type="match status" value="1"/>
</dbReference>
<dbReference type="PROSITE" id="PS00104">
    <property type="entry name" value="EPSP_SYNTHASE_1"/>
    <property type="match status" value="1"/>
</dbReference>
<dbReference type="PROSITE" id="PS00885">
    <property type="entry name" value="EPSP_SYNTHASE_2"/>
    <property type="match status" value="1"/>
</dbReference>
<sequence length="435" mass="44721">MTTWTAPLAPQPVHATVTVPGSKSQTNRALVLAALAAAQGRGTPTLSGALRSRDTDLMIGALRTLGLRVDGTGPELTVSGHIAPGPHARVDCGLAGTVLRFVPPLAALADAVVEFDGDEQARARPIAPLLDALRGLGVRIEGTALPFRVHGSGALAGGTVAIDASASSQFVSGLLLCAASFTEGLTVQHTGAALPSAPHIAMTVAMLRQAGVDVDDSVPNRWQVRPGPVAARHWEVEPDLTNAVPFLAAAVVSGGTVRITGWPADSVQPADNILSVLGKLNAVVSQTDSSLEVRGSGSYDGFDVDLRAVGELTPSVAALAALATPGSVSRLSGIAHLRGHETDRLAALSAEINRLGGDCTETPDGLVITATPLRPGVWHAYADHRMAMAGAIVGLRVAGVRVDDIGATSKTLPDFPRLWARMLDASLPDGEEHGM</sequence>
<accession>Q73UN2</accession>
<reference key="1">
    <citation type="journal article" date="2005" name="Proc. Natl. Acad. Sci. U.S.A.">
        <title>The complete genome sequence of Mycobacterium avium subspecies paratuberculosis.</title>
        <authorList>
            <person name="Li L."/>
            <person name="Bannantine J.P."/>
            <person name="Zhang Q."/>
            <person name="Amonsin A."/>
            <person name="May B.J."/>
            <person name="Alt D."/>
            <person name="Banerji N."/>
            <person name="Kanjilal S."/>
            <person name="Kapur V."/>
        </authorList>
    </citation>
    <scope>NUCLEOTIDE SEQUENCE [LARGE SCALE GENOMIC DNA]</scope>
    <source>
        <strain>ATCC BAA-968 / K-10</strain>
    </source>
</reference>
<keyword id="KW-0028">Amino-acid biosynthesis</keyword>
<keyword id="KW-0057">Aromatic amino acid biosynthesis</keyword>
<keyword id="KW-0963">Cytoplasm</keyword>
<keyword id="KW-1185">Reference proteome</keyword>
<keyword id="KW-0808">Transferase</keyword>
<gene>
    <name evidence="1" type="primary">aroA</name>
    <name type="ordered locus">MAP_3334</name>
</gene>
<name>AROA_MYCPA</name>
<proteinExistence type="inferred from homology"/>
<organism>
    <name type="scientific">Mycolicibacterium paratuberculosis (strain ATCC BAA-968 / K-10)</name>
    <name type="common">Mycobacterium paratuberculosis</name>
    <dbReference type="NCBI Taxonomy" id="262316"/>
    <lineage>
        <taxon>Bacteria</taxon>
        <taxon>Bacillati</taxon>
        <taxon>Actinomycetota</taxon>
        <taxon>Actinomycetes</taxon>
        <taxon>Mycobacteriales</taxon>
        <taxon>Mycobacteriaceae</taxon>
        <taxon>Mycobacterium</taxon>
        <taxon>Mycobacterium avium complex (MAC)</taxon>
    </lineage>
</organism>